<accession>P63741</accession>
<accession>Q99UH3</accession>
<feature type="chain" id="PRO_0000059490" description="Glycerol kinase">
    <location>
        <begin position="1"/>
        <end position="498"/>
    </location>
</feature>
<feature type="binding site" evidence="1">
    <location>
        <position position="12"/>
    </location>
    <ligand>
        <name>ADP</name>
        <dbReference type="ChEBI" id="CHEBI:456216"/>
    </ligand>
</feature>
<feature type="binding site" evidence="1">
    <location>
        <position position="12"/>
    </location>
    <ligand>
        <name>ATP</name>
        <dbReference type="ChEBI" id="CHEBI:30616"/>
    </ligand>
</feature>
<feature type="binding site" evidence="1">
    <location>
        <position position="12"/>
    </location>
    <ligand>
        <name>sn-glycerol 3-phosphate</name>
        <dbReference type="ChEBI" id="CHEBI:57597"/>
    </ligand>
</feature>
<feature type="binding site" evidence="1">
    <location>
        <position position="13"/>
    </location>
    <ligand>
        <name>ATP</name>
        <dbReference type="ChEBI" id="CHEBI:30616"/>
    </ligand>
</feature>
<feature type="binding site" evidence="1">
    <location>
        <position position="14"/>
    </location>
    <ligand>
        <name>ATP</name>
        <dbReference type="ChEBI" id="CHEBI:30616"/>
    </ligand>
</feature>
<feature type="binding site" evidence="1">
    <location>
        <position position="16"/>
    </location>
    <ligand>
        <name>ADP</name>
        <dbReference type="ChEBI" id="CHEBI:456216"/>
    </ligand>
</feature>
<feature type="binding site" evidence="1">
    <location>
        <position position="82"/>
    </location>
    <ligand>
        <name>glycerol</name>
        <dbReference type="ChEBI" id="CHEBI:17754"/>
    </ligand>
</feature>
<feature type="binding site" evidence="1">
    <location>
        <position position="82"/>
    </location>
    <ligand>
        <name>sn-glycerol 3-phosphate</name>
        <dbReference type="ChEBI" id="CHEBI:57597"/>
    </ligand>
</feature>
<feature type="binding site" evidence="1">
    <location>
        <position position="83"/>
    </location>
    <ligand>
        <name>glycerol</name>
        <dbReference type="ChEBI" id="CHEBI:17754"/>
    </ligand>
</feature>
<feature type="binding site" evidence="1">
    <location>
        <position position="83"/>
    </location>
    <ligand>
        <name>sn-glycerol 3-phosphate</name>
        <dbReference type="ChEBI" id="CHEBI:57597"/>
    </ligand>
</feature>
<feature type="binding site" evidence="1">
    <location>
        <position position="134"/>
    </location>
    <ligand>
        <name>glycerol</name>
        <dbReference type="ChEBI" id="CHEBI:17754"/>
    </ligand>
</feature>
<feature type="binding site" evidence="1">
    <location>
        <position position="134"/>
    </location>
    <ligand>
        <name>sn-glycerol 3-phosphate</name>
        <dbReference type="ChEBI" id="CHEBI:57597"/>
    </ligand>
</feature>
<feature type="binding site" evidence="1">
    <location>
        <position position="244"/>
    </location>
    <ligand>
        <name>glycerol</name>
        <dbReference type="ChEBI" id="CHEBI:17754"/>
    </ligand>
</feature>
<feature type="binding site" evidence="1">
    <location>
        <position position="244"/>
    </location>
    <ligand>
        <name>sn-glycerol 3-phosphate</name>
        <dbReference type="ChEBI" id="CHEBI:57597"/>
    </ligand>
</feature>
<feature type="binding site" evidence="1">
    <location>
        <position position="245"/>
    </location>
    <ligand>
        <name>glycerol</name>
        <dbReference type="ChEBI" id="CHEBI:17754"/>
    </ligand>
</feature>
<feature type="binding site" evidence="1">
    <location>
        <position position="266"/>
    </location>
    <ligand>
        <name>ADP</name>
        <dbReference type="ChEBI" id="CHEBI:456216"/>
    </ligand>
</feature>
<feature type="binding site" evidence="1">
    <location>
        <position position="266"/>
    </location>
    <ligand>
        <name>ATP</name>
        <dbReference type="ChEBI" id="CHEBI:30616"/>
    </ligand>
</feature>
<feature type="binding site" evidence="1">
    <location>
        <position position="309"/>
    </location>
    <ligand>
        <name>ADP</name>
        <dbReference type="ChEBI" id="CHEBI:456216"/>
    </ligand>
</feature>
<feature type="binding site" evidence="1">
    <location>
        <position position="309"/>
    </location>
    <ligand>
        <name>ATP</name>
        <dbReference type="ChEBI" id="CHEBI:30616"/>
    </ligand>
</feature>
<feature type="binding site" evidence="1">
    <location>
        <position position="313"/>
    </location>
    <ligand>
        <name>ATP</name>
        <dbReference type="ChEBI" id="CHEBI:30616"/>
    </ligand>
</feature>
<feature type="binding site" evidence="1">
    <location>
        <position position="410"/>
    </location>
    <ligand>
        <name>ADP</name>
        <dbReference type="ChEBI" id="CHEBI:456216"/>
    </ligand>
</feature>
<feature type="binding site" evidence="1">
    <location>
        <position position="410"/>
    </location>
    <ligand>
        <name>ATP</name>
        <dbReference type="ChEBI" id="CHEBI:30616"/>
    </ligand>
</feature>
<feature type="binding site" evidence="1">
    <location>
        <position position="414"/>
    </location>
    <ligand>
        <name>ADP</name>
        <dbReference type="ChEBI" id="CHEBI:456216"/>
    </ligand>
</feature>
<feature type="modified residue" description="Phosphohistidine; by HPr" evidence="1">
    <location>
        <position position="230"/>
    </location>
</feature>
<protein>
    <recommendedName>
        <fullName evidence="1">Glycerol kinase</fullName>
        <ecNumber evidence="1">2.7.1.30</ecNumber>
    </recommendedName>
    <alternativeName>
        <fullName evidence="1">ATP:glycerol 3-phosphotransferase</fullName>
    </alternativeName>
    <alternativeName>
        <fullName evidence="1">Glycerokinase</fullName>
        <shortName evidence="1">GK</shortName>
    </alternativeName>
</protein>
<name>GLPK_STAAM</name>
<organism>
    <name type="scientific">Staphylococcus aureus (strain Mu50 / ATCC 700699)</name>
    <dbReference type="NCBI Taxonomy" id="158878"/>
    <lineage>
        <taxon>Bacteria</taxon>
        <taxon>Bacillati</taxon>
        <taxon>Bacillota</taxon>
        <taxon>Bacilli</taxon>
        <taxon>Bacillales</taxon>
        <taxon>Staphylococcaceae</taxon>
        <taxon>Staphylococcus</taxon>
    </lineage>
</organism>
<evidence type="ECO:0000255" key="1">
    <source>
        <dbReference type="HAMAP-Rule" id="MF_00186"/>
    </source>
</evidence>
<reference key="1">
    <citation type="journal article" date="2001" name="Lancet">
        <title>Whole genome sequencing of meticillin-resistant Staphylococcus aureus.</title>
        <authorList>
            <person name="Kuroda M."/>
            <person name="Ohta T."/>
            <person name="Uchiyama I."/>
            <person name="Baba T."/>
            <person name="Yuzawa H."/>
            <person name="Kobayashi I."/>
            <person name="Cui L."/>
            <person name="Oguchi A."/>
            <person name="Aoki K."/>
            <person name="Nagai Y."/>
            <person name="Lian J.-Q."/>
            <person name="Ito T."/>
            <person name="Kanamori M."/>
            <person name="Matsumaru H."/>
            <person name="Maruyama A."/>
            <person name="Murakami H."/>
            <person name="Hosoyama A."/>
            <person name="Mizutani-Ui Y."/>
            <person name="Takahashi N.K."/>
            <person name="Sawano T."/>
            <person name="Inoue R."/>
            <person name="Kaito C."/>
            <person name="Sekimizu K."/>
            <person name="Hirakawa H."/>
            <person name="Kuhara S."/>
            <person name="Goto S."/>
            <person name="Yabuzaki J."/>
            <person name="Kanehisa M."/>
            <person name="Yamashita A."/>
            <person name="Oshima K."/>
            <person name="Furuya K."/>
            <person name="Yoshino C."/>
            <person name="Shiba T."/>
            <person name="Hattori M."/>
            <person name="Ogasawara N."/>
            <person name="Hayashi H."/>
            <person name="Hiramatsu K."/>
        </authorList>
    </citation>
    <scope>NUCLEOTIDE SEQUENCE [LARGE SCALE GENOMIC DNA]</scope>
    <source>
        <strain>Mu50 / ATCC 700699</strain>
    </source>
</reference>
<gene>
    <name evidence="1" type="primary">glpK</name>
    <name type="ordered locus">SAV1301</name>
</gene>
<proteinExistence type="inferred from homology"/>
<dbReference type="EC" id="2.7.1.30" evidence="1"/>
<dbReference type="EMBL" id="BA000017">
    <property type="protein sequence ID" value="BAB57463.1"/>
    <property type="molecule type" value="Genomic_DNA"/>
</dbReference>
<dbReference type="RefSeq" id="WP_000417372.1">
    <property type="nucleotide sequence ID" value="NC_002758.2"/>
</dbReference>
<dbReference type="SMR" id="P63741"/>
<dbReference type="KEGG" id="sav:SAV1301"/>
<dbReference type="HOGENOM" id="CLU_009281_2_3_9"/>
<dbReference type="PhylomeDB" id="P63741"/>
<dbReference type="UniPathway" id="UPA00618">
    <property type="reaction ID" value="UER00672"/>
</dbReference>
<dbReference type="Proteomes" id="UP000002481">
    <property type="component" value="Chromosome"/>
</dbReference>
<dbReference type="GO" id="GO:0005829">
    <property type="term" value="C:cytosol"/>
    <property type="evidence" value="ECO:0007669"/>
    <property type="project" value="TreeGrafter"/>
</dbReference>
<dbReference type="GO" id="GO:0005524">
    <property type="term" value="F:ATP binding"/>
    <property type="evidence" value="ECO:0007669"/>
    <property type="project" value="UniProtKB-UniRule"/>
</dbReference>
<dbReference type="GO" id="GO:0004370">
    <property type="term" value="F:glycerol kinase activity"/>
    <property type="evidence" value="ECO:0000250"/>
    <property type="project" value="UniProtKB"/>
</dbReference>
<dbReference type="GO" id="GO:0019563">
    <property type="term" value="P:glycerol catabolic process"/>
    <property type="evidence" value="ECO:0007669"/>
    <property type="project" value="UniProtKB-UniRule"/>
</dbReference>
<dbReference type="GO" id="GO:0006071">
    <property type="term" value="P:glycerol metabolic process"/>
    <property type="evidence" value="ECO:0000250"/>
    <property type="project" value="UniProtKB"/>
</dbReference>
<dbReference type="GO" id="GO:0006072">
    <property type="term" value="P:glycerol-3-phosphate metabolic process"/>
    <property type="evidence" value="ECO:0007669"/>
    <property type="project" value="InterPro"/>
</dbReference>
<dbReference type="CDD" id="cd07786">
    <property type="entry name" value="FGGY_EcGK_like"/>
    <property type="match status" value="1"/>
</dbReference>
<dbReference type="FunFam" id="3.30.420.40:FF:000007">
    <property type="entry name" value="Glycerol kinase"/>
    <property type="match status" value="1"/>
</dbReference>
<dbReference type="FunFam" id="3.30.420.40:FF:000008">
    <property type="entry name" value="Glycerol kinase"/>
    <property type="match status" value="1"/>
</dbReference>
<dbReference type="Gene3D" id="3.30.420.40">
    <property type="match status" value="2"/>
</dbReference>
<dbReference type="HAMAP" id="MF_00186">
    <property type="entry name" value="Glycerol_kin"/>
    <property type="match status" value="1"/>
</dbReference>
<dbReference type="InterPro" id="IPR043129">
    <property type="entry name" value="ATPase_NBD"/>
</dbReference>
<dbReference type="InterPro" id="IPR000577">
    <property type="entry name" value="Carb_kinase_FGGY"/>
</dbReference>
<dbReference type="InterPro" id="IPR018483">
    <property type="entry name" value="Carb_kinase_FGGY_CS"/>
</dbReference>
<dbReference type="InterPro" id="IPR018485">
    <property type="entry name" value="FGGY_C"/>
</dbReference>
<dbReference type="InterPro" id="IPR018484">
    <property type="entry name" value="FGGY_N"/>
</dbReference>
<dbReference type="InterPro" id="IPR005999">
    <property type="entry name" value="Glycerol_kin"/>
</dbReference>
<dbReference type="NCBIfam" id="TIGR01311">
    <property type="entry name" value="glycerol_kin"/>
    <property type="match status" value="1"/>
</dbReference>
<dbReference type="NCBIfam" id="NF000756">
    <property type="entry name" value="PRK00047.1"/>
    <property type="match status" value="1"/>
</dbReference>
<dbReference type="PANTHER" id="PTHR10196:SF69">
    <property type="entry name" value="GLYCEROL KINASE"/>
    <property type="match status" value="1"/>
</dbReference>
<dbReference type="PANTHER" id="PTHR10196">
    <property type="entry name" value="SUGAR KINASE"/>
    <property type="match status" value="1"/>
</dbReference>
<dbReference type="Pfam" id="PF02782">
    <property type="entry name" value="FGGY_C"/>
    <property type="match status" value="1"/>
</dbReference>
<dbReference type="Pfam" id="PF00370">
    <property type="entry name" value="FGGY_N"/>
    <property type="match status" value="1"/>
</dbReference>
<dbReference type="PIRSF" id="PIRSF000538">
    <property type="entry name" value="GlpK"/>
    <property type="match status" value="1"/>
</dbReference>
<dbReference type="SUPFAM" id="SSF53067">
    <property type="entry name" value="Actin-like ATPase domain"/>
    <property type="match status" value="2"/>
</dbReference>
<dbReference type="PROSITE" id="PS00445">
    <property type="entry name" value="FGGY_KINASES_2"/>
    <property type="match status" value="1"/>
</dbReference>
<keyword id="KW-0067">ATP-binding</keyword>
<keyword id="KW-0319">Glycerol metabolism</keyword>
<keyword id="KW-0418">Kinase</keyword>
<keyword id="KW-0547">Nucleotide-binding</keyword>
<keyword id="KW-0597">Phosphoprotein</keyword>
<keyword id="KW-0808">Transferase</keyword>
<sequence length="498" mass="55613">MEKYILSIDQGTTSSRAILFNQKGEIAGVAQREFKQYFPQSGWVEHDANEIWTSVLAVMTEVINENDVRADQIAGIGITNQRETTVVWDKHTGRPIYHAIVWQSRQTQSICSELKQQGYEQTFRDKTGLLLDPYFAGTKVKWILDNVEGAREKAENGDLLFGTIDTWLVWKLSGKAAHITDYSNASRTLMFNIHDLEWDDELLELLTVPKNMLPEVKPSSEIYGKTIDYHFYGQEVPIAGVAGDQQAALFGQACFECGDVKNTYGTGGFMLMNTGDKAVKSESGLLTTIAYGIDGKVNYALEGSIFVSGSAIQWLRDGLRMINSAPQSESYATRVDSTEGVYVVPAFVGLGTPYWDSEARGAIFGLTRGTEKEHFIRATLESLCYQTRDVMEAMSKDSGIDVQSLRVDGGAVKNNFIMQFQADIVNTSVERPEIQETTALGAAFLAGLAVGFWESKDDIAKNWKLEEKFDPKMDEGEREKLYRGWKKAVEATQVFKTE</sequence>
<comment type="function">
    <text evidence="1">Key enzyme in the regulation of glycerol uptake and metabolism. Catalyzes the phosphorylation of glycerol to yield sn-glycerol 3-phosphate.</text>
</comment>
<comment type="catalytic activity">
    <reaction evidence="1">
        <text>glycerol + ATP = sn-glycerol 3-phosphate + ADP + H(+)</text>
        <dbReference type="Rhea" id="RHEA:21644"/>
        <dbReference type="ChEBI" id="CHEBI:15378"/>
        <dbReference type="ChEBI" id="CHEBI:17754"/>
        <dbReference type="ChEBI" id="CHEBI:30616"/>
        <dbReference type="ChEBI" id="CHEBI:57597"/>
        <dbReference type="ChEBI" id="CHEBI:456216"/>
        <dbReference type="EC" id="2.7.1.30"/>
    </reaction>
</comment>
<comment type="activity regulation">
    <text evidence="1">Activated by phosphorylation and inhibited by fructose 1,6-bisphosphate (FBP).</text>
</comment>
<comment type="pathway">
    <text evidence="1">Polyol metabolism; glycerol degradation via glycerol kinase pathway; sn-glycerol 3-phosphate from glycerol: step 1/1.</text>
</comment>
<comment type="subunit">
    <text evidence="1">Homotetramer and homodimer (in equilibrium).</text>
</comment>
<comment type="PTM">
    <text evidence="1">The phosphoenolpyruvate-dependent sugar phosphotransferase system (PTS), including enzyme I, and histidine-containing protein (HPr) are required for the phosphorylation, which leads to the activation of the enzyme.</text>
</comment>
<comment type="similarity">
    <text evidence="1">Belongs to the FGGY kinase family.</text>
</comment>